<organism>
    <name type="scientific">Photorhabdus laumondii subsp. laumondii (strain DSM 15139 / CIP 105565 / TT01)</name>
    <name type="common">Photorhabdus luminescens subsp. laumondii</name>
    <dbReference type="NCBI Taxonomy" id="243265"/>
    <lineage>
        <taxon>Bacteria</taxon>
        <taxon>Pseudomonadati</taxon>
        <taxon>Pseudomonadota</taxon>
        <taxon>Gammaproteobacteria</taxon>
        <taxon>Enterobacterales</taxon>
        <taxon>Morganellaceae</taxon>
        <taxon>Photorhabdus</taxon>
    </lineage>
</organism>
<name>ASNA_PHOLL</name>
<proteinExistence type="inferred from homology"/>
<accession>Q7NA83</accession>
<sequence length="330" mass="37296">MKKSFIEKQQQISFVKSFFSRLLESKLGLIEVQGPILSCLGDGIQDNLSGHEKAVQVKVKTLPDSTFEVVHSLAKWKRRTLGRFGFQPEQGLYTHMKALRPDEDRLTPIHSVYVDQWDWEKVMEDGQRSLAYLKQTVGKIYEAIKETEKAVNKEFGLAPFLPDQIHFVHSETLLSRYPDLDAKGRERAIAKELGAVFLIGIGAKLSDGQSHDVRAPDYDDWTTPNSDGFVGLNGDIIVWNPVLEDAFEISSMGIRVDAEALERQLALTSDEERLQYDWHQALLKGDMPQSIGGGIGQSRLVMLLLQMKHIGQVQCSIWSPEVRETVEDML</sequence>
<protein>
    <recommendedName>
        <fullName evidence="1">Aspartate--ammonia ligase</fullName>
        <ecNumber evidence="1">6.3.1.1</ecNumber>
    </recommendedName>
    <alternativeName>
        <fullName evidence="1">Asparagine synthetase A</fullName>
    </alternativeName>
</protein>
<comment type="catalytic activity">
    <reaction evidence="1">
        <text>L-aspartate + NH4(+) + ATP = L-asparagine + AMP + diphosphate + H(+)</text>
        <dbReference type="Rhea" id="RHEA:11372"/>
        <dbReference type="ChEBI" id="CHEBI:15378"/>
        <dbReference type="ChEBI" id="CHEBI:28938"/>
        <dbReference type="ChEBI" id="CHEBI:29991"/>
        <dbReference type="ChEBI" id="CHEBI:30616"/>
        <dbReference type="ChEBI" id="CHEBI:33019"/>
        <dbReference type="ChEBI" id="CHEBI:58048"/>
        <dbReference type="ChEBI" id="CHEBI:456215"/>
        <dbReference type="EC" id="6.3.1.1"/>
    </reaction>
</comment>
<comment type="pathway">
    <text evidence="1">Amino-acid biosynthesis; L-asparagine biosynthesis; L-asparagine from L-aspartate (ammonia route): step 1/1.</text>
</comment>
<comment type="subcellular location">
    <subcellularLocation>
        <location evidence="1">Cytoplasm</location>
    </subcellularLocation>
</comment>
<comment type="similarity">
    <text evidence="1">Belongs to the class-II aminoacyl-tRNA synthetase family. AsnA subfamily.</text>
</comment>
<reference key="1">
    <citation type="journal article" date="2003" name="Nat. Biotechnol.">
        <title>The genome sequence of the entomopathogenic bacterium Photorhabdus luminescens.</title>
        <authorList>
            <person name="Duchaud E."/>
            <person name="Rusniok C."/>
            <person name="Frangeul L."/>
            <person name="Buchrieser C."/>
            <person name="Givaudan A."/>
            <person name="Taourit S."/>
            <person name="Bocs S."/>
            <person name="Boursaux-Eude C."/>
            <person name="Chandler M."/>
            <person name="Charles J.-F."/>
            <person name="Dassa E."/>
            <person name="Derose R."/>
            <person name="Derzelle S."/>
            <person name="Freyssinet G."/>
            <person name="Gaudriault S."/>
            <person name="Medigue C."/>
            <person name="Lanois A."/>
            <person name="Powell K."/>
            <person name="Siguier P."/>
            <person name="Vincent R."/>
            <person name="Wingate V."/>
            <person name="Zouine M."/>
            <person name="Glaser P."/>
            <person name="Boemare N."/>
            <person name="Danchin A."/>
            <person name="Kunst F."/>
        </authorList>
    </citation>
    <scope>NUCLEOTIDE SEQUENCE [LARGE SCALE GENOMIC DNA]</scope>
    <source>
        <strain>DSM 15139 / CIP 105565 / TT01</strain>
    </source>
</reference>
<dbReference type="EC" id="6.3.1.1" evidence="1"/>
<dbReference type="EMBL" id="BX571859">
    <property type="protein sequence ID" value="CAE12347.1"/>
    <property type="molecule type" value="Genomic_DNA"/>
</dbReference>
<dbReference type="RefSeq" id="WP_011144464.1">
    <property type="nucleotide sequence ID" value="NC_005126.1"/>
</dbReference>
<dbReference type="SMR" id="Q7NA83"/>
<dbReference type="STRING" id="243265.plu0052"/>
<dbReference type="GeneID" id="48846352"/>
<dbReference type="KEGG" id="plu:plu0052"/>
<dbReference type="eggNOG" id="COG2502">
    <property type="taxonomic scope" value="Bacteria"/>
</dbReference>
<dbReference type="HOGENOM" id="CLU_071543_0_0_6"/>
<dbReference type="OrthoDB" id="3185462at2"/>
<dbReference type="UniPathway" id="UPA00134">
    <property type="reaction ID" value="UER00194"/>
</dbReference>
<dbReference type="Proteomes" id="UP000002514">
    <property type="component" value="Chromosome"/>
</dbReference>
<dbReference type="GO" id="GO:0005829">
    <property type="term" value="C:cytosol"/>
    <property type="evidence" value="ECO:0007669"/>
    <property type="project" value="TreeGrafter"/>
</dbReference>
<dbReference type="GO" id="GO:0004071">
    <property type="term" value="F:aspartate-ammonia ligase activity"/>
    <property type="evidence" value="ECO:0007669"/>
    <property type="project" value="UniProtKB-UniRule"/>
</dbReference>
<dbReference type="GO" id="GO:0005524">
    <property type="term" value="F:ATP binding"/>
    <property type="evidence" value="ECO:0007669"/>
    <property type="project" value="UniProtKB-UniRule"/>
</dbReference>
<dbReference type="GO" id="GO:0070981">
    <property type="term" value="P:L-asparagine biosynthetic process"/>
    <property type="evidence" value="ECO:0007669"/>
    <property type="project" value="UniProtKB-UniRule"/>
</dbReference>
<dbReference type="Gene3D" id="3.30.930.10">
    <property type="entry name" value="Bira Bifunctional Protein, Domain 2"/>
    <property type="match status" value="1"/>
</dbReference>
<dbReference type="HAMAP" id="MF_00555">
    <property type="entry name" value="AsnA"/>
    <property type="match status" value="1"/>
</dbReference>
<dbReference type="InterPro" id="IPR006195">
    <property type="entry name" value="aa-tRNA-synth_II"/>
</dbReference>
<dbReference type="InterPro" id="IPR045864">
    <property type="entry name" value="aa-tRNA-synth_II/BPL/LPL"/>
</dbReference>
<dbReference type="InterPro" id="IPR004618">
    <property type="entry name" value="AsnA"/>
</dbReference>
<dbReference type="NCBIfam" id="TIGR00669">
    <property type="entry name" value="asnA"/>
    <property type="match status" value="1"/>
</dbReference>
<dbReference type="PANTHER" id="PTHR30073">
    <property type="entry name" value="ASPARTATE--AMMONIA LIGASE"/>
    <property type="match status" value="1"/>
</dbReference>
<dbReference type="PANTHER" id="PTHR30073:SF5">
    <property type="entry name" value="ASPARTATE--AMMONIA LIGASE"/>
    <property type="match status" value="1"/>
</dbReference>
<dbReference type="Pfam" id="PF03590">
    <property type="entry name" value="AsnA"/>
    <property type="match status" value="1"/>
</dbReference>
<dbReference type="PIRSF" id="PIRSF001555">
    <property type="entry name" value="Asp_ammon_ligase"/>
    <property type="match status" value="1"/>
</dbReference>
<dbReference type="SUPFAM" id="SSF55681">
    <property type="entry name" value="Class II aaRS and biotin synthetases"/>
    <property type="match status" value="1"/>
</dbReference>
<dbReference type="PROSITE" id="PS50862">
    <property type="entry name" value="AA_TRNA_LIGASE_II"/>
    <property type="match status" value="1"/>
</dbReference>
<keyword id="KW-0028">Amino-acid biosynthesis</keyword>
<keyword id="KW-0061">Asparagine biosynthesis</keyword>
<keyword id="KW-0067">ATP-binding</keyword>
<keyword id="KW-0963">Cytoplasm</keyword>
<keyword id="KW-0436">Ligase</keyword>
<keyword id="KW-0547">Nucleotide-binding</keyword>
<keyword id="KW-1185">Reference proteome</keyword>
<gene>
    <name evidence="1" type="primary">asnA</name>
    <name type="ordered locus">plu0052</name>
</gene>
<feature type="chain" id="PRO_0000195885" description="Aspartate--ammonia ligase">
    <location>
        <begin position="1"/>
        <end position="330"/>
    </location>
</feature>
<evidence type="ECO:0000255" key="1">
    <source>
        <dbReference type="HAMAP-Rule" id="MF_00555"/>
    </source>
</evidence>